<reference key="1">
    <citation type="journal article" date="2000" name="Science">
        <title>The genome sequence of Drosophila melanogaster.</title>
        <authorList>
            <person name="Adams M.D."/>
            <person name="Celniker S.E."/>
            <person name="Holt R.A."/>
            <person name="Evans C.A."/>
            <person name="Gocayne J.D."/>
            <person name="Amanatides P.G."/>
            <person name="Scherer S.E."/>
            <person name="Li P.W."/>
            <person name="Hoskins R.A."/>
            <person name="Galle R.F."/>
            <person name="George R.A."/>
            <person name="Lewis S.E."/>
            <person name="Richards S."/>
            <person name="Ashburner M."/>
            <person name="Henderson S.N."/>
            <person name="Sutton G.G."/>
            <person name="Wortman J.R."/>
            <person name="Yandell M.D."/>
            <person name="Zhang Q."/>
            <person name="Chen L.X."/>
            <person name="Brandon R.C."/>
            <person name="Rogers Y.-H.C."/>
            <person name="Blazej R.G."/>
            <person name="Champe M."/>
            <person name="Pfeiffer B.D."/>
            <person name="Wan K.H."/>
            <person name="Doyle C."/>
            <person name="Baxter E.G."/>
            <person name="Helt G."/>
            <person name="Nelson C.R."/>
            <person name="Miklos G.L.G."/>
            <person name="Abril J.F."/>
            <person name="Agbayani A."/>
            <person name="An H.-J."/>
            <person name="Andrews-Pfannkoch C."/>
            <person name="Baldwin D."/>
            <person name="Ballew R.M."/>
            <person name="Basu A."/>
            <person name="Baxendale J."/>
            <person name="Bayraktaroglu L."/>
            <person name="Beasley E.M."/>
            <person name="Beeson K.Y."/>
            <person name="Benos P.V."/>
            <person name="Berman B.P."/>
            <person name="Bhandari D."/>
            <person name="Bolshakov S."/>
            <person name="Borkova D."/>
            <person name="Botchan M.R."/>
            <person name="Bouck J."/>
            <person name="Brokstein P."/>
            <person name="Brottier P."/>
            <person name="Burtis K.C."/>
            <person name="Busam D.A."/>
            <person name="Butler H."/>
            <person name="Cadieu E."/>
            <person name="Center A."/>
            <person name="Chandra I."/>
            <person name="Cherry J.M."/>
            <person name="Cawley S."/>
            <person name="Dahlke C."/>
            <person name="Davenport L.B."/>
            <person name="Davies P."/>
            <person name="de Pablos B."/>
            <person name="Delcher A."/>
            <person name="Deng Z."/>
            <person name="Mays A.D."/>
            <person name="Dew I."/>
            <person name="Dietz S.M."/>
            <person name="Dodson K."/>
            <person name="Doup L.E."/>
            <person name="Downes M."/>
            <person name="Dugan-Rocha S."/>
            <person name="Dunkov B.C."/>
            <person name="Dunn P."/>
            <person name="Durbin K.J."/>
            <person name="Evangelista C.C."/>
            <person name="Ferraz C."/>
            <person name="Ferriera S."/>
            <person name="Fleischmann W."/>
            <person name="Fosler C."/>
            <person name="Gabrielian A.E."/>
            <person name="Garg N.S."/>
            <person name="Gelbart W.M."/>
            <person name="Glasser K."/>
            <person name="Glodek A."/>
            <person name="Gong F."/>
            <person name="Gorrell J.H."/>
            <person name="Gu Z."/>
            <person name="Guan P."/>
            <person name="Harris M."/>
            <person name="Harris N.L."/>
            <person name="Harvey D.A."/>
            <person name="Heiman T.J."/>
            <person name="Hernandez J.R."/>
            <person name="Houck J."/>
            <person name="Hostin D."/>
            <person name="Houston K.A."/>
            <person name="Howland T.J."/>
            <person name="Wei M.-H."/>
            <person name="Ibegwam C."/>
            <person name="Jalali M."/>
            <person name="Kalush F."/>
            <person name="Karpen G.H."/>
            <person name="Ke Z."/>
            <person name="Kennison J.A."/>
            <person name="Ketchum K.A."/>
            <person name="Kimmel B.E."/>
            <person name="Kodira C.D."/>
            <person name="Kraft C.L."/>
            <person name="Kravitz S."/>
            <person name="Kulp D."/>
            <person name="Lai Z."/>
            <person name="Lasko P."/>
            <person name="Lei Y."/>
            <person name="Levitsky A.A."/>
            <person name="Li J.H."/>
            <person name="Li Z."/>
            <person name="Liang Y."/>
            <person name="Lin X."/>
            <person name="Liu X."/>
            <person name="Mattei B."/>
            <person name="McIntosh T.C."/>
            <person name="McLeod M.P."/>
            <person name="McPherson D."/>
            <person name="Merkulov G."/>
            <person name="Milshina N.V."/>
            <person name="Mobarry C."/>
            <person name="Morris J."/>
            <person name="Moshrefi A."/>
            <person name="Mount S.M."/>
            <person name="Moy M."/>
            <person name="Murphy B."/>
            <person name="Murphy L."/>
            <person name="Muzny D.M."/>
            <person name="Nelson D.L."/>
            <person name="Nelson D.R."/>
            <person name="Nelson K.A."/>
            <person name="Nixon K."/>
            <person name="Nusskern D.R."/>
            <person name="Pacleb J.M."/>
            <person name="Palazzolo M."/>
            <person name="Pittman G.S."/>
            <person name="Pan S."/>
            <person name="Pollard J."/>
            <person name="Puri V."/>
            <person name="Reese M.G."/>
            <person name="Reinert K."/>
            <person name="Remington K."/>
            <person name="Saunders R.D.C."/>
            <person name="Scheeler F."/>
            <person name="Shen H."/>
            <person name="Shue B.C."/>
            <person name="Siden-Kiamos I."/>
            <person name="Simpson M."/>
            <person name="Skupski M.P."/>
            <person name="Smith T.J."/>
            <person name="Spier E."/>
            <person name="Spradling A.C."/>
            <person name="Stapleton M."/>
            <person name="Strong R."/>
            <person name="Sun E."/>
            <person name="Svirskas R."/>
            <person name="Tector C."/>
            <person name="Turner R."/>
            <person name="Venter E."/>
            <person name="Wang A.H."/>
            <person name="Wang X."/>
            <person name="Wang Z.-Y."/>
            <person name="Wassarman D.A."/>
            <person name="Weinstock G.M."/>
            <person name="Weissenbach J."/>
            <person name="Williams S.M."/>
            <person name="Woodage T."/>
            <person name="Worley K.C."/>
            <person name="Wu D."/>
            <person name="Yang S."/>
            <person name="Yao Q.A."/>
            <person name="Ye J."/>
            <person name="Yeh R.-F."/>
            <person name="Zaveri J.S."/>
            <person name="Zhan M."/>
            <person name="Zhang G."/>
            <person name="Zhao Q."/>
            <person name="Zheng L."/>
            <person name="Zheng X.H."/>
            <person name="Zhong F.N."/>
            <person name="Zhong W."/>
            <person name="Zhou X."/>
            <person name="Zhu S.C."/>
            <person name="Zhu X."/>
            <person name="Smith H.O."/>
            <person name="Gibbs R.A."/>
            <person name="Myers E.W."/>
            <person name="Rubin G.M."/>
            <person name="Venter J.C."/>
        </authorList>
    </citation>
    <scope>NUCLEOTIDE SEQUENCE [LARGE SCALE GENOMIC DNA]</scope>
    <source>
        <strain>Berkeley</strain>
    </source>
</reference>
<reference key="2">
    <citation type="journal article" date="2002" name="Genome Biol.">
        <title>Annotation of the Drosophila melanogaster euchromatic genome: a systematic review.</title>
        <authorList>
            <person name="Misra S."/>
            <person name="Crosby M.A."/>
            <person name="Mungall C.J."/>
            <person name="Matthews B.B."/>
            <person name="Campbell K.S."/>
            <person name="Hradecky P."/>
            <person name="Huang Y."/>
            <person name="Kaminker J.S."/>
            <person name="Millburn G.H."/>
            <person name="Prochnik S.E."/>
            <person name="Smith C.D."/>
            <person name="Tupy J.L."/>
            <person name="Whitfield E.J."/>
            <person name="Bayraktaroglu L."/>
            <person name="Berman B.P."/>
            <person name="Bettencourt B.R."/>
            <person name="Celniker S.E."/>
            <person name="de Grey A.D.N.J."/>
            <person name="Drysdale R.A."/>
            <person name="Harris N.L."/>
            <person name="Richter J."/>
            <person name="Russo S."/>
            <person name="Schroeder A.J."/>
            <person name="Shu S.Q."/>
            <person name="Stapleton M."/>
            <person name="Yamada C."/>
            <person name="Ashburner M."/>
            <person name="Gelbart W.M."/>
            <person name="Rubin G.M."/>
            <person name="Lewis S.E."/>
        </authorList>
    </citation>
    <scope>GENOME REANNOTATION</scope>
    <scope>ALTERNATIVE SPLICING</scope>
    <source>
        <strain>Berkeley</strain>
    </source>
</reference>
<reference key="3">
    <citation type="journal article" date="2002" name="Genome Biol.">
        <title>A Drosophila full-length cDNA resource.</title>
        <authorList>
            <person name="Stapleton M."/>
            <person name="Carlson J.W."/>
            <person name="Brokstein P."/>
            <person name="Yu C."/>
            <person name="Champe M."/>
            <person name="George R.A."/>
            <person name="Guarin H."/>
            <person name="Kronmiller B."/>
            <person name="Pacleb J.M."/>
            <person name="Park S."/>
            <person name="Wan K.H."/>
            <person name="Rubin G.M."/>
            <person name="Celniker S.E."/>
        </authorList>
    </citation>
    <scope>NUCLEOTIDE SEQUENCE [LARGE SCALE MRNA] (ISOFORM A)</scope>
    <source>
        <strain>Berkeley</strain>
        <tissue>Embryo</tissue>
    </source>
</reference>
<reference key="4">
    <citation type="journal article" date="2017" name="Dis. Model. Mech.">
        <title>A homozygous FITM2 mutation causes a deafness-dystonia syndrome with motor regression and signs of ichthyosis and sensory neuropathy.</title>
        <authorList>
            <person name="Zazo Seco C."/>
            <person name="Castells-Nobau A."/>
            <person name="Joo S.H."/>
            <person name="Schraders M."/>
            <person name="Foo J.N."/>
            <person name="van der Voet M."/>
            <person name="Velan S.S."/>
            <person name="Nijhof B."/>
            <person name="Oostrik J."/>
            <person name="de Vrieze E."/>
            <person name="Katana R."/>
            <person name="Mansoor A."/>
            <person name="Huynen M."/>
            <person name="Szklarczyk R."/>
            <person name="Oti M."/>
            <person name="Tranebjaerg L."/>
            <person name="van Wijk E."/>
            <person name="Scheffer-de Gooyert J.M."/>
            <person name="Siddique S."/>
            <person name="Baets J."/>
            <person name="de Jonghe P."/>
            <person name="Kazmi S.A."/>
            <person name="Sadananthan S.A."/>
            <person name="van de Warrenburg B.P."/>
            <person name="Khor C.C."/>
            <person name="Goepfert M.C."/>
            <person name="Qamar R."/>
            <person name="Schenck A."/>
            <person name="Kremer H."/>
            <person name="Siddiqi S."/>
        </authorList>
    </citation>
    <scope>FUNCTION</scope>
    <scope>DISRUPTION PHENOTYPE</scope>
</reference>
<proteinExistence type="evidence at protein level"/>
<feature type="chain" id="PRO_0000319577" description="Acyl-coenzyme A diphosphatase FITM2">
    <location>
        <begin position="1"/>
        <end position="423"/>
    </location>
</feature>
<feature type="topological domain" description="Cytoplasmic" evidence="6">
    <location>
        <begin position="1"/>
        <end position="75"/>
    </location>
</feature>
<feature type="transmembrane region" description="Helical" evidence="1">
    <location>
        <begin position="76"/>
        <end position="96"/>
    </location>
</feature>
<feature type="topological domain" description="Lumenal" evidence="6">
    <location>
        <begin position="97"/>
        <end position="113"/>
    </location>
</feature>
<feature type="transmembrane region" description="Helical" evidence="1">
    <location>
        <begin position="114"/>
        <end position="134"/>
    </location>
</feature>
<feature type="topological domain" description="Cytoplasmic" evidence="6">
    <location>
        <begin position="135"/>
        <end position="146"/>
    </location>
</feature>
<feature type="transmembrane region" description="Helical" evidence="1">
    <location>
        <begin position="147"/>
        <end position="167"/>
    </location>
</feature>
<feature type="topological domain" description="Lumenal" evidence="6">
    <location>
        <begin position="168"/>
        <end position="191"/>
    </location>
</feature>
<feature type="transmembrane region" description="Helical" evidence="1">
    <location>
        <begin position="192"/>
        <end position="212"/>
    </location>
</feature>
<feature type="topological domain" description="Cytoplasmic" evidence="6">
    <location>
        <begin position="213"/>
        <end position="270"/>
    </location>
</feature>
<feature type="transmembrane region" description="Helical" evidence="1">
    <location>
        <begin position="271"/>
        <end position="291"/>
    </location>
</feature>
<feature type="topological domain" description="Lumenal" evidence="6">
    <location>
        <begin position="292"/>
        <end position="299"/>
    </location>
</feature>
<feature type="transmembrane region" description="Helical" evidence="1">
    <location>
        <begin position="300"/>
        <end position="320"/>
    </location>
</feature>
<feature type="topological domain" description="Cytoplasmic" evidence="6">
    <location>
        <begin position="321"/>
        <end position="423"/>
    </location>
</feature>
<feature type="region of interest" description="Disordered" evidence="3">
    <location>
        <begin position="1"/>
        <end position="47"/>
    </location>
</feature>
<feature type="region of interest" description="Disordered" evidence="3">
    <location>
        <begin position="344"/>
        <end position="381"/>
    </location>
</feature>
<feature type="region of interest" description="Disordered" evidence="3">
    <location>
        <begin position="400"/>
        <end position="423"/>
    </location>
</feature>
<feature type="compositionally biased region" description="Low complexity" evidence="3">
    <location>
        <begin position="351"/>
        <end position="367"/>
    </location>
</feature>
<feature type="compositionally biased region" description="Basic and acidic residues" evidence="3">
    <location>
        <begin position="409"/>
        <end position="423"/>
    </location>
</feature>
<feature type="active site" evidence="2">
    <location>
        <position position="200"/>
    </location>
</feature>
<feature type="active site" evidence="2">
    <location>
        <position position="294"/>
    </location>
</feature>
<feature type="splice variant" id="VSP_031494" description="In isoform B." evidence="6">
    <original>M</original>
    <variation>MRWHCLVTGKCVWQPLNFDTHDSFAFTFAFHSQHYQKRQQTTQFSSDTLWTRATAPAM</variation>
    <location>
        <position position="1"/>
    </location>
</feature>
<feature type="sequence conflict" description="In Ref. 3; AAL13842." evidence="6" ref="3">
    <original>H</original>
    <variation>D</variation>
    <location>
        <position position="200"/>
    </location>
</feature>
<accession>Q9VRJ2</accession>
<accession>Q8I933</accession>
<accession>Q95TQ4</accession>
<evidence type="ECO:0000255" key="1"/>
<evidence type="ECO:0000255" key="2">
    <source>
        <dbReference type="HAMAP-Rule" id="MF_03230"/>
    </source>
</evidence>
<evidence type="ECO:0000256" key="3">
    <source>
        <dbReference type="SAM" id="MobiDB-lite"/>
    </source>
</evidence>
<evidence type="ECO:0000269" key="4">
    <source>
    </source>
</evidence>
<evidence type="ECO:0000303" key="5">
    <source>
    </source>
</evidence>
<evidence type="ECO:0000305" key="6"/>
<evidence type="ECO:0000312" key="7">
    <source>
        <dbReference type="FlyBase" id="FBgn0035586"/>
    </source>
</evidence>
<dbReference type="EC" id="3.6.1.-" evidence="2"/>
<dbReference type="EMBL" id="AE014296">
    <property type="protein sequence ID" value="AAF50803.1"/>
    <property type="molecule type" value="Genomic_DNA"/>
</dbReference>
<dbReference type="EMBL" id="AE014296">
    <property type="protein sequence ID" value="AAN12239.2"/>
    <property type="molecule type" value="Genomic_DNA"/>
</dbReference>
<dbReference type="EMBL" id="AY058613">
    <property type="protein sequence ID" value="AAL13842.1"/>
    <property type="molecule type" value="mRNA"/>
</dbReference>
<dbReference type="RefSeq" id="NP_647944.2">
    <molecule id="Q9VRJ2-1"/>
    <property type="nucleotide sequence ID" value="NM_139687.3"/>
</dbReference>
<dbReference type="RefSeq" id="NP_729053.2">
    <molecule id="Q9VRJ2-2"/>
    <property type="nucleotide sequence ID" value="NM_168110.3"/>
</dbReference>
<dbReference type="BioGRID" id="64064">
    <property type="interactions" value="3"/>
</dbReference>
<dbReference type="FunCoup" id="Q9VRJ2">
    <property type="interactions" value="375"/>
</dbReference>
<dbReference type="IntAct" id="Q9VRJ2">
    <property type="interactions" value="1"/>
</dbReference>
<dbReference type="STRING" id="7227.FBpp0076880"/>
<dbReference type="GlyGen" id="Q9VRJ2">
    <property type="glycosylation" value="1 site"/>
</dbReference>
<dbReference type="PaxDb" id="7227-FBpp0076880"/>
<dbReference type="EnsemblMetazoa" id="FBtr0077177">
    <molecule id="Q9VRJ2-2"/>
    <property type="protein sequence ID" value="FBpp0076880"/>
    <property type="gene ID" value="FBgn0035586"/>
</dbReference>
<dbReference type="EnsemblMetazoa" id="FBtr0077178">
    <molecule id="Q9VRJ2-1"/>
    <property type="protein sequence ID" value="FBpp0076881"/>
    <property type="gene ID" value="FBgn0035586"/>
</dbReference>
<dbReference type="GeneID" id="38596"/>
<dbReference type="KEGG" id="dme:Dmel_CG10671"/>
<dbReference type="UCSC" id="CG10671-RA">
    <molecule id="Q9VRJ2-1"/>
    <property type="organism name" value="d. melanogaster"/>
</dbReference>
<dbReference type="AGR" id="FB:FBgn0035586"/>
<dbReference type="CTD" id="38596"/>
<dbReference type="FlyBase" id="FBgn0035586">
    <property type="gene designation" value="Fitm"/>
</dbReference>
<dbReference type="VEuPathDB" id="VectorBase:FBgn0035586"/>
<dbReference type="eggNOG" id="KOG3750">
    <property type="taxonomic scope" value="Eukaryota"/>
</dbReference>
<dbReference type="GeneTree" id="ENSGT00530000063693"/>
<dbReference type="HOGENOM" id="CLU_049499_0_0_1"/>
<dbReference type="InParanoid" id="Q9VRJ2"/>
<dbReference type="OMA" id="LYHHRMA"/>
<dbReference type="OrthoDB" id="5579088at2759"/>
<dbReference type="PhylomeDB" id="Q9VRJ2"/>
<dbReference type="Reactome" id="R-DME-8964572">
    <property type="pathway name" value="Lipid particle organization"/>
</dbReference>
<dbReference type="BioGRID-ORCS" id="38596">
    <property type="hits" value="0 hits in 3 CRISPR screens"/>
</dbReference>
<dbReference type="ChiTaRS" id="CG10671">
    <property type="organism name" value="fly"/>
</dbReference>
<dbReference type="GenomeRNAi" id="38596"/>
<dbReference type="PRO" id="PR:Q9VRJ2"/>
<dbReference type="Proteomes" id="UP000000803">
    <property type="component" value="Chromosome 3L"/>
</dbReference>
<dbReference type="Bgee" id="FBgn0035586">
    <property type="expression patterns" value="Expressed in crop (Drosophila) and 82 other cell types or tissues"/>
</dbReference>
<dbReference type="GO" id="GO:0005789">
    <property type="term" value="C:endoplasmic reticulum membrane"/>
    <property type="evidence" value="ECO:0000250"/>
    <property type="project" value="FlyBase"/>
</dbReference>
<dbReference type="GO" id="GO:0010945">
    <property type="term" value="F:coenzyme A diphosphatase activity"/>
    <property type="evidence" value="ECO:0000250"/>
    <property type="project" value="UniProtKB"/>
</dbReference>
<dbReference type="GO" id="GO:0008344">
    <property type="term" value="P:adult locomotory behavior"/>
    <property type="evidence" value="ECO:0000315"/>
    <property type="project" value="FlyBase"/>
</dbReference>
<dbReference type="GO" id="GO:0036115">
    <property type="term" value="P:fatty-acyl-CoA catabolic process"/>
    <property type="evidence" value="ECO:0000250"/>
    <property type="project" value="UniProtKB"/>
</dbReference>
<dbReference type="GO" id="GO:0140042">
    <property type="term" value="P:lipid droplet formation"/>
    <property type="evidence" value="ECO:0000250"/>
    <property type="project" value="UniProtKB"/>
</dbReference>
<dbReference type="GO" id="GO:0034389">
    <property type="term" value="P:lipid droplet organization"/>
    <property type="evidence" value="ECO:0000315"/>
    <property type="project" value="FlyBase"/>
</dbReference>
<dbReference type="GO" id="GO:0055088">
    <property type="term" value="P:lipid homeostasis"/>
    <property type="evidence" value="ECO:0000250"/>
    <property type="project" value="UniProtKB"/>
</dbReference>
<dbReference type="GO" id="GO:0019915">
    <property type="term" value="P:lipid storage"/>
    <property type="evidence" value="ECO:0000318"/>
    <property type="project" value="GO_Central"/>
</dbReference>
<dbReference type="GO" id="GO:0008654">
    <property type="term" value="P:phospholipid biosynthetic process"/>
    <property type="evidence" value="ECO:0000318"/>
    <property type="project" value="GO_Central"/>
</dbReference>
<dbReference type="GO" id="GO:0050773">
    <property type="term" value="P:regulation of dendrite development"/>
    <property type="evidence" value="ECO:0000315"/>
    <property type="project" value="FlyBase"/>
</dbReference>
<dbReference type="GO" id="GO:0007605">
    <property type="term" value="P:sensory perception of sound"/>
    <property type="evidence" value="ECO:0000315"/>
    <property type="project" value="FlyBase"/>
</dbReference>
<dbReference type="GO" id="GO:0030730">
    <property type="term" value="P:triglyceride storage"/>
    <property type="evidence" value="ECO:0000250"/>
    <property type="project" value="FlyBase"/>
</dbReference>
<dbReference type="HAMAP" id="MF_03230">
    <property type="entry name" value="FITM2"/>
    <property type="match status" value="1"/>
</dbReference>
<dbReference type="InterPro" id="IPR019388">
    <property type="entry name" value="FIT"/>
</dbReference>
<dbReference type="InterPro" id="IPR046401">
    <property type="entry name" value="FITM1/2"/>
</dbReference>
<dbReference type="PANTHER" id="PTHR23129">
    <property type="entry name" value="ACYL-COENZYME A DIPHOSPHATASE FITM2"/>
    <property type="match status" value="1"/>
</dbReference>
<dbReference type="PANTHER" id="PTHR23129:SF0">
    <property type="entry name" value="ACYL-COENZYME A DIPHOSPHATASE FITM2"/>
    <property type="match status" value="1"/>
</dbReference>
<dbReference type="Pfam" id="PF10261">
    <property type="entry name" value="FIT"/>
    <property type="match status" value="2"/>
</dbReference>
<name>FITM2_DROME</name>
<keyword id="KW-0025">Alternative splicing</keyword>
<keyword id="KW-0256">Endoplasmic reticulum</keyword>
<keyword id="KW-0378">Hydrolase</keyword>
<keyword id="KW-0443">Lipid metabolism</keyword>
<keyword id="KW-0472">Membrane</keyword>
<keyword id="KW-1185">Reference proteome</keyword>
<keyword id="KW-0812">Transmembrane</keyword>
<keyword id="KW-1133">Transmembrane helix</keyword>
<organism>
    <name type="scientific">Drosophila melanogaster</name>
    <name type="common">Fruit fly</name>
    <dbReference type="NCBI Taxonomy" id="7227"/>
    <lineage>
        <taxon>Eukaryota</taxon>
        <taxon>Metazoa</taxon>
        <taxon>Ecdysozoa</taxon>
        <taxon>Arthropoda</taxon>
        <taxon>Hexapoda</taxon>
        <taxon>Insecta</taxon>
        <taxon>Pterygota</taxon>
        <taxon>Neoptera</taxon>
        <taxon>Endopterygota</taxon>
        <taxon>Diptera</taxon>
        <taxon>Brachycera</taxon>
        <taxon>Muscomorpha</taxon>
        <taxon>Ephydroidea</taxon>
        <taxon>Drosophilidae</taxon>
        <taxon>Drosophila</taxon>
        <taxon>Sophophora</taxon>
    </lineage>
</organism>
<gene>
    <name evidence="2" type="primary">Fitm2</name>
    <name evidence="2" type="synonym">Fit2</name>
    <name evidence="5 7" type="synonym">Fitm</name>
    <name evidence="7" type="ORF">CG10671</name>
</gene>
<sequence length="423" mass="47884">MATKRRPLRPNLGGTAGSPSSSGSNMNFRPGGPDITRSEARGTRPTAAPTSIREILVMGVIHLCKKTIFFNTDLKVALYLGSLFVISVIGDFVPFPKTYFARSDNLFNQYFVKIGWGWTLLFVVPFLVLSAYTITCGDHKRMLRHHFPRIVIATFFWFFWTKLFNVVENSYGRCTTKGYATKSSCLKAGHLWKGFDISGHAFILIHSSLVLIEEARPIIRWETIKEHIRNERHNRSTAENSGTNPLRTLNEEQMRSLQFLYKRLTPIIRTLFIGMAALQLLWDIMLVGTMLYYHRMIEKVISGIIAILTWYFTYRFWYPTPGLLPEAPGNGSFSYQREIPTFPFKRPSHLSTGAATTSSGSNSSRTNLNGKAATTGVPRDQQIPTFMGMPLFTSPKAASAAANLLMSDQQKRERDREQQTLES</sequence>
<comment type="function">
    <text evidence="2 4">Fatty acyl-coenzyme A (CoA) diphosphatase that hydrolyzes fatty acyl-CoA to yield acyl-4'-phosphopantetheine and adenosine 3',5'-bisphosphate (By similarity). Preferentially hydrolyzes unsaturated long-chain acyl-CoA substrates in the endoplasmic reticulum (ER) lumen (By similarity). This catalytic activity is required for maintaining ER structure and for lipid droplets (LDs) biogenesis, which are lipid storage organelles involved in maintaining lipid and energy homeostasis (By similarity) (PubMed:28067622). May directly bind to diacylglycerol (DAGs) and triacylglycerol, which is also important for LD biogenesis (By similarity). May support directional budding of nacent LDs from the ER into the cytosol by reducing DAG levels at sites of LD formation (By similarity). Plays a role in the regulation of cell morphology and cytoskeletal organization (By similarity) (PubMed:28067622). Required for correct morphology of nociceptive multi-dendritic sensory neurons (PubMed:28067622). Required for normal mechanical amplification in hearing (PubMed:28067622).</text>
</comment>
<comment type="catalytic activity">
    <reaction evidence="2">
        <text>an acyl-CoA + H2O = an acyl-4'-phosphopantetheine + adenosine 3',5'-bisphosphate + 2 H(+)</text>
        <dbReference type="Rhea" id="RHEA:50044"/>
        <dbReference type="ChEBI" id="CHEBI:15377"/>
        <dbReference type="ChEBI" id="CHEBI:15378"/>
        <dbReference type="ChEBI" id="CHEBI:58342"/>
        <dbReference type="ChEBI" id="CHEBI:58343"/>
        <dbReference type="ChEBI" id="CHEBI:132023"/>
    </reaction>
    <physiologicalReaction direction="left-to-right" evidence="2">
        <dbReference type="Rhea" id="RHEA:50045"/>
    </physiologicalReaction>
</comment>
<comment type="interaction">
    <interactant intactId="EBI-75319">
        <id>Q9VRJ2</id>
    </interactant>
    <interactant intactId="EBI-74922">
        <id>O96757</id>
        <label>stumps</label>
    </interactant>
    <organismsDiffer>false</organismsDiffer>
    <experiments>4</experiments>
</comment>
<comment type="subcellular location">
    <subcellularLocation>
        <location evidence="2">Endoplasmic reticulum membrane</location>
        <topology evidence="2">Multi-pass membrane protein</topology>
    </subcellularLocation>
</comment>
<comment type="alternative products">
    <event type="alternative splicing"/>
    <isoform>
        <id>Q9VRJ2-1</id>
        <name>A</name>
        <sequence type="displayed"/>
    </isoform>
    <isoform>
        <id>Q9VRJ2-2</id>
        <name>B</name>
        <sequence type="described" ref="VSP_031494"/>
    </isoform>
</comment>
<comment type="disruption phenotype">
    <text evidence="4">RNAi-mediated knockdown results in loss of auditory sensitivity (PubMed:28067622). In the whole body or specifically in muscle cells or fat body, results in locomotor impairment, uncontrolled and uncoordinated wing movements leading to flightless phenotype (PubMed:28067622). In nociceptive dorsal class IV dendritic arborization C (ddaC) neurons results in altered branching and dendritic field coverage in third instar larvae (PubMed:28067622). In fat body reduces lipid droplet size with aging (PubMed:28067622). In all neurons does not show any of the phenotypes above (PubMed:28067622).</text>
</comment>
<comment type="similarity">
    <text evidence="2">Belongs to the FIT family. FIT2 subfamily.</text>
</comment>
<protein>
    <recommendedName>
        <fullName evidence="2">Acyl-coenzyme A diphosphatase FITM2</fullName>
        <ecNumber evidence="2">3.6.1.-</ecNumber>
    </recommendedName>
    <alternativeName>
        <fullName evidence="5 7">Fat storage-inducing transmembrane protein</fullName>
    </alternativeName>
    <alternativeName>
        <fullName evidence="2">Fat storage-inducing transmembrane protein 2</fullName>
    </alternativeName>
    <alternativeName>
        <fullName evidence="2">Fat-inducing protein 2</fullName>
    </alternativeName>
</protein>